<comment type="function">
    <text evidence="1">Catalyzes the alpha,beta-elimination reaction of D-cysteine and of several D-cysteine derivatives. It could be a defense mechanism against D-cysteine.</text>
</comment>
<comment type="catalytic activity">
    <reaction evidence="1">
        <text>D-cysteine + H2O = hydrogen sulfide + pyruvate + NH4(+) + H(+)</text>
        <dbReference type="Rhea" id="RHEA:11268"/>
        <dbReference type="ChEBI" id="CHEBI:15361"/>
        <dbReference type="ChEBI" id="CHEBI:15377"/>
        <dbReference type="ChEBI" id="CHEBI:15378"/>
        <dbReference type="ChEBI" id="CHEBI:28938"/>
        <dbReference type="ChEBI" id="CHEBI:29919"/>
        <dbReference type="ChEBI" id="CHEBI:35236"/>
        <dbReference type="EC" id="4.4.1.15"/>
    </reaction>
</comment>
<comment type="cofactor">
    <cofactor evidence="1">
        <name>pyridoxal 5'-phosphate</name>
        <dbReference type="ChEBI" id="CHEBI:597326"/>
    </cofactor>
</comment>
<comment type="subunit">
    <text evidence="1">Homodimer.</text>
</comment>
<comment type="similarity">
    <text evidence="1">Belongs to the ACC deaminase/D-cysteine desulfhydrase family.</text>
</comment>
<accession>C4ZQJ7</accession>
<protein>
    <recommendedName>
        <fullName evidence="1">D-cysteine desulfhydrase</fullName>
        <ecNumber evidence="1">4.4.1.15</ecNumber>
    </recommendedName>
</protein>
<dbReference type="EC" id="4.4.1.15" evidence="1"/>
<dbReference type="EMBL" id="CP001396">
    <property type="protein sequence ID" value="ACR62738.1"/>
    <property type="molecule type" value="Genomic_DNA"/>
</dbReference>
<dbReference type="RefSeq" id="WP_001128215.1">
    <property type="nucleotide sequence ID" value="NC_012759.1"/>
</dbReference>
<dbReference type="SMR" id="C4ZQJ7"/>
<dbReference type="GeneID" id="75205835"/>
<dbReference type="KEGG" id="ebw:BWG_1728"/>
<dbReference type="HOGENOM" id="CLU_048897_1_0_6"/>
<dbReference type="GO" id="GO:0019148">
    <property type="term" value="F:D-cysteine desulfhydrase activity"/>
    <property type="evidence" value="ECO:0007669"/>
    <property type="project" value="UniProtKB-UniRule"/>
</dbReference>
<dbReference type="GO" id="GO:0046416">
    <property type="term" value="P:D-amino acid metabolic process"/>
    <property type="evidence" value="ECO:0007669"/>
    <property type="project" value="UniProtKB-UniRule"/>
</dbReference>
<dbReference type="CDD" id="cd06449">
    <property type="entry name" value="ACCD"/>
    <property type="match status" value="1"/>
</dbReference>
<dbReference type="FunFam" id="3.40.50.1100:FF:000019">
    <property type="entry name" value="D-cysteine desulfhydrase"/>
    <property type="match status" value="1"/>
</dbReference>
<dbReference type="Gene3D" id="3.40.50.1100">
    <property type="match status" value="2"/>
</dbReference>
<dbReference type="HAMAP" id="MF_01045">
    <property type="entry name" value="D_Cys_desulfhydr"/>
    <property type="match status" value="1"/>
</dbReference>
<dbReference type="InterPro" id="IPR027278">
    <property type="entry name" value="ACCD_DCysDesulf"/>
</dbReference>
<dbReference type="InterPro" id="IPR005966">
    <property type="entry name" value="D-Cys_desShydrase"/>
</dbReference>
<dbReference type="InterPro" id="IPR023702">
    <property type="entry name" value="D_Cys_desulphydr_bac"/>
</dbReference>
<dbReference type="InterPro" id="IPR001926">
    <property type="entry name" value="TrpB-like_PALP"/>
</dbReference>
<dbReference type="InterPro" id="IPR036052">
    <property type="entry name" value="TrpB-like_PALP_sf"/>
</dbReference>
<dbReference type="NCBIfam" id="TIGR01275">
    <property type="entry name" value="ACC_deam_rel"/>
    <property type="match status" value="1"/>
</dbReference>
<dbReference type="NCBIfam" id="NF003029">
    <property type="entry name" value="PRK03910.1-1"/>
    <property type="match status" value="1"/>
</dbReference>
<dbReference type="NCBIfam" id="NF003030">
    <property type="entry name" value="PRK03910.1-3"/>
    <property type="match status" value="1"/>
</dbReference>
<dbReference type="NCBIfam" id="NF003032">
    <property type="entry name" value="PRK03910.1-5"/>
    <property type="match status" value="1"/>
</dbReference>
<dbReference type="PANTHER" id="PTHR43780">
    <property type="entry name" value="1-AMINOCYCLOPROPANE-1-CARBOXYLATE DEAMINASE-RELATED"/>
    <property type="match status" value="1"/>
</dbReference>
<dbReference type="PANTHER" id="PTHR43780:SF2">
    <property type="entry name" value="1-AMINOCYCLOPROPANE-1-CARBOXYLATE DEAMINASE-RELATED"/>
    <property type="match status" value="1"/>
</dbReference>
<dbReference type="Pfam" id="PF00291">
    <property type="entry name" value="PALP"/>
    <property type="match status" value="1"/>
</dbReference>
<dbReference type="PIRSF" id="PIRSF006278">
    <property type="entry name" value="ACCD_DCysDesulf"/>
    <property type="match status" value="1"/>
</dbReference>
<dbReference type="SUPFAM" id="SSF53686">
    <property type="entry name" value="Tryptophan synthase beta subunit-like PLP-dependent enzymes"/>
    <property type="match status" value="1"/>
</dbReference>
<sequence length="328" mass="35153">MPLHNLTRFPRLEFIGAPTPLEYLPRFSDYLGREIFIKRDDVTPMAMGGNKLRKLEFLAADALREGADTLITAGAIQSNHVRQTAAVAAKLGLHCVALLENPIGTTAENYLTNGNRLLLDLFNTQIEMCDALTDPNAQLEELATRVEAQGFRPYVIPVGGSNALGALGYVESALEIAQQCEGAVNISSVVVASGSAGTHAGLAVGLEHLMPESELIGVTVSRSVADQLPKVVNLQQAIAKELELTASAEILLWDDYFAPGYGVPNDEGMEAVKLLARLEGILLDPVYTGKAMAGLIDGISQKRFKDEGPILFIHTGGAPALFAYHPHV</sequence>
<keyword id="KW-0456">Lyase</keyword>
<keyword id="KW-0663">Pyridoxal phosphate</keyword>
<evidence type="ECO:0000255" key="1">
    <source>
        <dbReference type="HAMAP-Rule" id="MF_01045"/>
    </source>
</evidence>
<proteinExistence type="inferred from homology"/>
<gene>
    <name evidence="1" type="primary">dcyD</name>
    <name type="ordered locus">BWG_1728</name>
</gene>
<organism>
    <name type="scientific">Escherichia coli (strain K12 / MC4100 / BW2952)</name>
    <dbReference type="NCBI Taxonomy" id="595496"/>
    <lineage>
        <taxon>Bacteria</taxon>
        <taxon>Pseudomonadati</taxon>
        <taxon>Pseudomonadota</taxon>
        <taxon>Gammaproteobacteria</taxon>
        <taxon>Enterobacterales</taxon>
        <taxon>Enterobacteriaceae</taxon>
        <taxon>Escherichia</taxon>
    </lineage>
</organism>
<name>DCYD_ECOBW</name>
<reference key="1">
    <citation type="journal article" date="2009" name="J. Bacteriol.">
        <title>Genomic sequencing reveals regulatory mutations and recombinational events in the widely used MC4100 lineage of Escherichia coli K-12.</title>
        <authorList>
            <person name="Ferenci T."/>
            <person name="Zhou Z."/>
            <person name="Betteridge T."/>
            <person name="Ren Y."/>
            <person name="Liu Y."/>
            <person name="Feng L."/>
            <person name="Reeves P.R."/>
            <person name="Wang L."/>
        </authorList>
    </citation>
    <scope>NUCLEOTIDE SEQUENCE [LARGE SCALE GENOMIC DNA]</scope>
    <source>
        <strain>K12 / MC4100 / BW2952</strain>
    </source>
</reference>
<feature type="chain" id="PRO_1000213420" description="D-cysteine desulfhydrase">
    <location>
        <begin position="1"/>
        <end position="328"/>
    </location>
</feature>
<feature type="modified residue" description="N6-(pyridoxal phosphate)lysine" evidence="1">
    <location>
        <position position="51"/>
    </location>
</feature>